<accession>Q5ZR99</accession>
<keyword id="KW-0066">ATP synthesis</keyword>
<keyword id="KW-0067">ATP-binding</keyword>
<keyword id="KW-0997">Cell inner membrane</keyword>
<keyword id="KW-1003">Cell membrane</keyword>
<keyword id="KW-0139">CF(1)</keyword>
<keyword id="KW-0375">Hydrogen ion transport</keyword>
<keyword id="KW-0406">Ion transport</keyword>
<keyword id="KW-0472">Membrane</keyword>
<keyword id="KW-0547">Nucleotide-binding</keyword>
<keyword id="KW-1185">Reference proteome</keyword>
<keyword id="KW-1278">Translocase</keyword>
<keyword id="KW-0813">Transport</keyword>
<feature type="chain" id="PRO_0000238273" description="ATP synthase subunit alpha 2">
    <location>
        <begin position="1"/>
        <end position="517"/>
    </location>
</feature>
<feature type="binding site" evidence="1">
    <location>
        <begin position="173"/>
        <end position="180"/>
    </location>
    <ligand>
        <name>ATP</name>
        <dbReference type="ChEBI" id="CHEBI:30616"/>
    </ligand>
</feature>
<feature type="site" description="Required for activity" evidence="1">
    <location>
        <position position="377"/>
    </location>
</feature>
<protein>
    <recommendedName>
        <fullName evidence="1">ATP synthase subunit alpha 2</fullName>
        <ecNumber evidence="1">7.1.2.2</ecNumber>
    </recommendedName>
    <alternativeName>
        <fullName evidence="1">ATP synthase F1 sector subunit alpha 2</fullName>
    </alternativeName>
    <alternativeName>
        <fullName evidence="1">F-ATPase subunit alpha 2</fullName>
    </alternativeName>
</protein>
<organism>
    <name type="scientific">Legionella pneumophila subsp. pneumophila (strain Philadelphia 1 / ATCC 33152 / DSM 7513)</name>
    <dbReference type="NCBI Taxonomy" id="272624"/>
    <lineage>
        <taxon>Bacteria</taxon>
        <taxon>Pseudomonadati</taxon>
        <taxon>Pseudomonadota</taxon>
        <taxon>Gammaproteobacteria</taxon>
        <taxon>Legionellales</taxon>
        <taxon>Legionellaceae</taxon>
        <taxon>Legionella</taxon>
    </lineage>
</organism>
<name>ATPA2_LEGPH</name>
<evidence type="ECO:0000255" key="1">
    <source>
        <dbReference type="HAMAP-Rule" id="MF_01346"/>
    </source>
</evidence>
<reference key="1">
    <citation type="journal article" date="2004" name="Science">
        <title>The genomic sequence of the accidental pathogen Legionella pneumophila.</title>
        <authorList>
            <person name="Chien M."/>
            <person name="Morozova I."/>
            <person name="Shi S."/>
            <person name="Sheng H."/>
            <person name="Chen J."/>
            <person name="Gomez S.M."/>
            <person name="Asamani G."/>
            <person name="Hill K."/>
            <person name="Nuara J."/>
            <person name="Feder M."/>
            <person name="Rineer J."/>
            <person name="Greenberg J.J."/>
            <person name="Steshenko V."/>
            <person name="Park S.H."/>
            <person name="Zhao B."/>
            <person name="Teplitskaya E."/>
            <person name="Edwards J.R."/>
            <person name="Pampou S."/>
            <person name="Georghiou A."/>
            <person name="Chou I.-C."/>
            <person name="Iannuccilli W."/>
            <person name="Ulz M.E."/>
            <person name="Kim D.H."/>
            <person name="Geringer-Sameth A."/>
            <person name="Goldsberry C."/>
            <person name="Morozov P."/>
            <person name="Fischer S.G."/>
            <person name="Segal G."/>
            <person name="Qu X."/>
            <person name="Rzhetsky A."/>
            <person name="Zhang P."/>
            <person name="Cayanis E."/>
            <person name="De Jong P.J."/>
            <person name="Ju J."/>
            <person name="Kalachikov S."/>
            <person name="Shuman H.A."/>
            <person name="Russo J.J."/>
        </authorList>
    </citation>
    <scope>NUCLEOTIDE SEQUENCE [LARGE SCALE GENOMIC DNA]</scope>
    <source>
        <strain>Philadelphia 1 / ATCC 33152 / DSM 7513</strain>
    </source>
</reference>
<sequence>MSEQVALNPSEISELIRKKIDQFSVVSEARNEGTIVSLKDGIVRLHGLADVMAGEMIEFPGGVYGLALNLERDSVGAVILGDSSTLAEGQKGKCTGRILEVPVGKGLLGRVVDALGNPIDGKGPIESSGMSPIEKVAPGVITRKSVDQPVQTGLKAIDAMIPVGRGQRELIIGDRQTGKTAIAIDAIINQKGTGVKCVYVAIGQKASSVASIVRKLEEHGALEHTIVVVAGASDSAALQYIAPYSGCTMGEYFMERGEDALIVYDDLTKQAWAYRQISLLLRRPPGREAYPGDIFYLHSRLLERAARINADEVEKLTNGEVKGKTGSLTALPIIETQAGDVSAFVPTNVISITDGQIFLDVDLFNSGVRPAINSGLSVSRVGGAAQTKIMKKLGGGTRLALAQFRELEAFSQFASDLDDATRKQLERGQRITELMKQKQYSPLTVAEMGVSLFVVEKGYLDDVPVNEISSFEASLHDYMRSTHAALLHAINEAGAYDNEIEAKLKKAVEEFKNTGSW</sequence>
<gene>
    <name evidence="1" type="primary">atpA2</name>
    <name type="ordered locus">lpg2984</name>
</gene>
<proteinExistence type="inferred from homology"/>
<dbReference type="EC" id="7.1.2.2" evidence="1"/>
<dbReference type="EMBL" id="AE017354">
    <property type="protein sequence ID" value="AAU29029.1"/>
    <property type="molecule type" value="Genomic_DNA"/>
</dbReference>
<dbReference type="RefSeq" id="YP_096976.1">
    <property type="nucleotide sequence ID" value="NC_002942.5"/>
</dbReference>
<dbReference type="SMR" id="Q5ZR99"/>
<dbReference type="STRING" id="272624.lpg2984"/>
<dbReference type="PaxDb" id="272624-lpg2984"/>
<dbReference type="KEGG" id="lpn:lpg2984"/>
<dbReference type="PATRIC" id="fig|272624.6.peg.3190"/>
<dbReference type="eggNOG" id="COG0056">
    <property type="taxonomic scope" value="Bacteria"/>
</dbReference>
<dbReference type="HOGENOM" id="CLU_010091_2_1_6"/>
<dbReference type="OrthoDB" id="9803053at2"/>
<dbReference type="Proteomes" id="UP000000609">
    <property type="component" value="Chromosome"/>
</dbReference>
<dbReference type="GO" id="GO:0005886">
    <property type="term" value="C:plasma membrane"/>
    <property type="evidence" value="ECO:0007669"/>
    <property type="project" value="UniProtKB-SubCell"/>
</dbReference>
<dbReference type="GO" id="GO:0045259">
    <property type="term" value="C:proton-transporting ATP synthase complex"/>
    <property type="evidence" value="ECO:0007669"/>
    <property type="project" value="UniProtKB-KW"/>
</dbReference>
<dbReference type="GO" id="GO:0043531">
    <property type="term" value="F:ADP binding"/>
    <property type="evidence" value="ECO:0007669"/>
    <property type="project" value="TreeGrafter"/>
</dbReference>
<dbReference type="GO" id="GO:0005524">
    <property type="term" value="F:ATP binding"/>
    <property type="evidence" value="ECO:0007669"/>
    <property type="project" value="UniProtKB-UniRule"/>
</dbReference>
<dbReference type="GO" id="GO:0046933">
    <property type="term" value="F:proton-transporting ATP synthase activity, rotational mechanism"/>
    <property type="evidence" value="ECO:0007669"/>
    <property type="project" value="UniProtKB-UniRule"/>
</dbReference>
<dbReference type="CDD" id="cd18113">
    <property type="entry name" value="ATP-synt_F1_alpha_C"/>
    <property type="match status" value="1"/>
</dbReference>
<dbReference type="CDD" id="cd18116">
    <property type="entry name" value="ATP-synt_F1_alpha_N"/>
    <property type="match status" value="1"/>
</dbReference>
<dbReference type="CDD" id="cd01132">
    <property type="entry name" value="F1-ATPase_alpha_CD"/>
    <property type="match status" value="1"/>
</dbReference>
<dbReference type="FunFam" id="1.20.150.20:FF:000001">
    <property type="entry name" value="ATP synthase subunit alpha"/>
    <property type="match status" value="1"/>
</dbReference>
<dbReference type="FunFam" id="2.40.30.20:FF:000001">
    <property type="entry name" value="ATP synthase subunit alpha"/>
    <property type="match status" value="1"/>
</dbReference>
<dbReference type="FunFam" id="3.40.50.300:FF:000002">
    <property type="entry name" value="ATP synthase subunit alpha"/>
    <property type="match status" value="1"/>
</dbReference>
<dbReference type="Gene3D" id="2.40.30.20">
    <property type="match status" value="1"/>
</dbReference>
<dbReference type="Gene3D" id="1.20.150.20">
    <property type="entry name" value="ATP synthase alpha/beta chain, C-terminal domain"/>
    <property type="match status" value="1"/>
</dbReference>
<dbReference type="Gene3D" id="3.40.50.300">
    <property type="entry name" value="P-loop containing nucleotide triphosphate hydrolases"/>
    <property type="match status" value="1"/>
</dbReference>
<dbReference type="HAMAP" id="MF_01346">
    <property type="entry name" value="ATP_synth_alpha_bact"/>
    <property type="match status" value="1"/>
</dbReference>
<dbReference type="InterPro" id="IPR023366">
    <property type="entry name" value="ATP_synth_asu-like_sf"/>
</dbReference>
<dbReference type="InterPro" id="IPR000793">
    <property type="entry name" value="ATP_synth_asu_C"/>
</dbReference>
<dbReference type="InterPro" id="IPR038376">
    <property type="entry name" value="ATP_synth_asu_C_sf"/>
</dbReference>
<dbReference type="InterPro" id="IPR033732">
    <property type="entry name" value="ATP_synth_F1_a_nt-bd_dom"/>
</dbReference>
<dbReference type="InterPro" id="IPR005294">
    <property type="entry name" value="ATP_synth_F1_asu"/>
</dbReference>
<dbReference type="InterPro" id="IPR020003">
    <property type="entry name" value="ATPase_a/bsu_AS"/>
</dbReference>
<dbReference type="InterPro" id="IPR004100">
    <property type="entry name" value="ATPase_F1/V1/A1_a/bsu_N"/>
</dbReference>
<dbReference type="InterPro" id="IPR036121">
    <property type="entry name" value="ATPase_F1/V1/A1_a/bsu_N_sf"/>
</dbReference>
<dbReference type="InterPro" id="IPR000194">
    <property type="entry name" value="ATPase_F1/V1/A1_a/bsu_nucl-bd"/>
</dbReference>
<dbReference type="InterPro" id="IPR027417">
    <property type="entry name" value="P-loop_NTPase"/>
</dbReference>
<dbReference type="NCBIfam" id="TIGR00962">
    <property type="entry name" value="atpA"/>
    <property type="match status" value="1"/>
</dbReference>
<dbReference type="NCBIfam" id="NF009884">
    <property type="entry name" value="PRK13343.1"/>
    <property type="match status" value="1"/>
</dbReference>
<dbReference type="PANTHER" id="PTHR48082">
    <property type="entry name" value="ATP SYNTHASE SUBUNIT ALPHA, MITOCHONDRIAL"/>
    <property type="match status" value="1"/>
</dbReference>
<dbReference type="PANTHER" id="PTHR48082:SF2">
    <property type="entry name" value="ATP SYNTHASE SUBUNIT ALPHA, MITOCHONDRIAL"/>
    <property type="match status" value="1"/>
</dbReference>
<dbReference type="Pfam" id="PF00006">
    <property type="entry name" value="ATP-synt_ab"/>
    <property type="match status" value="1"/>
</dbReference>
<dbReference type="Pfam" id="PF00306">
    <property type="entry name" value="ATP-synt_ab_C"/>
    <property type="match status" value="1"/>
</dbReference>
<dbReference type="Pfam" id="PF02874">
    <property type="entry name" value="ATP-synt_ab_N"/>
    <property type="match status" value="1"/>
</dbReference>
<dbReference type="PIRSF" id="PIRSF039088">
    <property type="entry name" value="F_ATPase_subunit_alpha"/>
    <property type="match status" value="1"/>
</dbReference>
<dbReference type="SUPFAM" id="SSF47917">
    <property type="entry name" value="C-terminal domain of alpha and beta subunits of F1 ATP synthase"/>
    <property type="match status" value="1"/>
</dbReference>
<dbReference type="SUPFAM" id="SSF50615">
    <property type="entry name" value="N-terminal domain of alpha and beta subunits of F1 ATP synthase"/>
    <property type="match status" value="1"/>
</dbReference>
<dbReference type="SUPFAM" id="SSF52540">
    <property type="entry name" value="P-loop containing nucleoside triphosphate hydrolases"/>
    <property type="match status" value="1"/>
</dbReference>
<dbReference type="PROSITE" id="PS00152">
    <property type="entry name" value="ATPASE_ALPHA_BETA"/>
    <property type="match status" value="1"/>
</dbReference>
<comment type="function">
    <text evidence="1">Produces ATP from ADP in the presence of a proton gradient across the membrane. The alpha chain is a regulatory subunit.</text>
</comment>
<comment type="catalytic activity">
    <reaction evidence="1">
        <text>ATP + H2O + 4 H(+)(in) = ADP + phosphate + 5 H(+)(out)</text>
        <dbReference type="Rhea" id="RHEA:57720"/>
        <dbReference type="ChEBI" id="CHEBI:15377"/>
        <dbReference type="ChEBI" id="CHEBI:15378"/>
        <dbReference type="ChEBI" id="CHEBI:30616"/>
        <dbReference type="ChEBI" id="CHEBI:43474"/>
        <dbReference type="ChEBI" id="CHEBI:456216"/>
        <dbReference type="EC" id="7.1.2.2"/>
    </reaction>
</comment>
<comment type="subunit">
    <text evidence="1">F-type ATPases have 2 components, CF(1) - the catalytic core - and CF(0) - the membrane proton channel. CF(1) has five subunits: alpha(3), beta(3), gamma(1), delta(1), epsilon(1). CF(0) has three main subunits: a(1), b(2) and c(9-12). The alpha and beta chains form an alternating ring which encloses part of the gamma chain. CF(1) is attached to CF(0) by a central stalk formed by the gamma and epsilon chains, while a peripheral stalk is formed by the delta and b chains.</text>
</comment>
<comment type="subcellular location">
    <subcellularLocation>
        <location evidence="1">Cell inner membrane</location>
        <topology evidence="1">Peripheral membrane protein</topology>
    </subcellularLocation>
</comment>
<comment type="similarity">
    <text evidence="1">Belongs to the ATPase alpha/beta chains family.</text>
</comment>